<comment type="function">
    <text>Binds to the 23S rRNA.</text>
</comment>
<comment type="cofactor">
    <cofactor evidence="5">
        <name>Zn(2+)</name>
        <dbReference type="ChEBI" id="CHEBI:29105"/>
    </cofactor>
    <text evidence="5">Binds 1 zinc ion per subunit.</text>
</comment>
<comment type="subunit">
    <text evidence="2 3">Part of the 50S ribosomal subunit. Forms a cluster with proteins L3 and L14.</text>
</comment>
<comment type="similarity">
    <text evidence="5">Belongs to the eukaryotic ribosomal protein eL24 family.</text>
</comment>
<comment type="sequence caution" evidence="5">
    <conflict type="frameshift">
        <sequence resource="EMBL-CDS" id="AAV45180"/>
    </conflict>
</comment>
<dbReference type="EMBL" id="AY596297">
    <property type="protein sequence ID" value="AAV45180.1"/>
    <property type="status" value="ALT_FRAME"/>
    <property type="molecule type" value="Genomic_DNA"/>
</dbReference>
<dbReference type="PIR" id="S06846">
    <property type="entry name" value="R6HS21"/>
</dbReference>
<dbReference type="RefSeq" id="WP_011222823.1">
    <property type="nucleotide sequence ID" value="NZ_CP039138.1"/>
</dbReference>
<dbReference type="PDB" id="1FFK">
    <property type="method" value="X-ray"/>
    <property type="resolution" value="2.40 A"/>
    <property type="chains" value="R=2-67"/>
</dbReference>
<dbReference type="PDB" id="1JJ2">
    <property type="method" value="X-ray"/>
    <property type="resolution" value="2.40 A"/>
    <property type="chains" value="T=2-67"/>
</dbReference>
<dbReference type="PDB" id="1K73">
    <property type="method" value="X-ray"/>
    <property type="resolution" value="3.01 A"/>
    <property type="chains" value="V=2-67"/>
</dbReference>
<dbReference type="PDB" id="1K8A">
    <property type="method" value="X-ray"/>
    <property type="resolution" value="3.00 A"/>
    <property type="chains" value="V=2-67"/>
</dbReference>
<dbReference type="PDB" id="1K9M">
    <property type="method" value="X-ray"/>
    <property type="resolution" value="3.00 A"/>
    <property type="chains" value="V=2-67"/>
</dbReference>
<dbReference type="PDB" id="1KC8">
    <property type="method" value="X-ray"/>
    <property type="resolution" value="3.01 A"/>
    <property type="chains" value="V=2-67"/>
</dbReference>
<dbReference type="PDB" id="1KD1">
    <property type="method" value="X-ray"/>
    <property type="resolution" value="3.00 A"/>
    <property type="chains" value="V=2-67"/>
</dbReference>
<dbReference type="PDB" id="1KQS">
    <property type="method" value="X-ray"/>
    <property type="resolution" value="3.10 A"/>
    <property type="chains" value="T=2-67"/>
</dbReference>
<dbReference type="PDB" id="1M1K">
    <property type="method" value="X-ray"/>
    <property type="resolution" value="3.20 A"/>
    <property type="chains" value="V=2-67"/>
</dbReference>
<dbReference type="PDB" id="1M90">
    <property type="method" value="X-ray"/>
    <property type="resolution" value="2.80 A"/>
    <property type="chains" value="V=2-67"/>
</dbReference>
<dbReference type="PDB" id="1ML5">
    <property type="method" value="EM"/>
    <property type="resolution" value="14.00 A"/>
    <property type="chains" value="r=2-67"/>
</dbReference>
<dbReference type="PDB" id="1N8R">
    <property type="method" value="X-ray"/>
    <property type="resolution" value="3.00 A"/>
    <property type="chains" value="V=2-67"/>
</dbReference>
<dbReference type="PDB" id="1NJI">
    <property type="method" value="X-ray"/>
    <property type="resolution" value="3.00 A"/>
    <property type="chains" value="V=2-67"/>
</dbReference>
<dbReference type="PDB" id="1Q7Y">
    <property type="method" value="X-ray"/>
    <property type="resolution" value="3.20 A"/>
    <property type="chains" value="V=2-67"/>
</dbReference>
<dbReference type="PDB" id="1Q81">
    <property type="method" value="X-ray"/>
    <property type="resolution" value="2.95 A"/>
    <property type="chains" value="V=2-67"/>
</dbReference>
<dbReference type="PDB" id="1Q82">
    <property type="method" value="X-ray"/>
    <property type="resolution" value="2.98 A"/>
    <property type="chains" value="V=2-67"/>
</dbReference>
<dbReference type="PDB" id="1Q86">
    <property type="method" value="X-ray"/>
    <property type="resolution" value="3.00 A"/>
    <property type="chains" value="V=2-67"/>
</dbReference>
<dbReference type="PDB" id="1QVF">
    <property type="method" value="X-ray"/>
    <property type="resolution" value="3.10 A"/>
    <property type="chains" value="T=2-67"/>
</dbReference>
<dbReference type="PDB" id="1QVG">
    <property type="method" value="X-ray"/>
    <property type="resolution" value="2.90 A"/>
    <property type="chains" value="T=2-67"/>
</dbReference>
<dbReference type="PDB" id="1S72">
    <property type="method" value="X-ray"/>
    <property type="resolution" value="2.40 A"/>
    <property type="chains" value="U=2-67"/>
</dbReference>
<dbReference type="PDB" id="1VQ4">
    <property type="method" value="X-ray"/>
    <property type="resolution" value="2.70 A"/>
    <property type="chains" value="U=2-67"/>
</dbReference>
<dbReference type="PDB" id="1VQ5">
    <property type="method" value="X-ray"/>
    <property type="resolution" value="2.60 A"/>
    <property type="chains" value="U=2-67"/>
</dbReference>
<dbReference type="PDB" id="1VQ6">
    <property type="method" value="X-ray"/>
    <property type="resolution" value="2.70 A"/>
    <property type="chains" value="U=2-67"/>
</dbReference>
<dbReference type="PDB" id="1VQ7">
    <property type="method" value="X-ray"/>
    <property type="resolution" value="2.50 A"/>
    <property type="chains" value="U=2-67"/>
</dbReference>
<dbReference type="PDB" id="1VQ8">
    <property type="method" value="X-ray"/>
    <property type="resolution" value="2.20 A"/>
    <property type="chains" value="U=2-67"/>
</dbReference>
<dbReference type="PDB" id="1VQ9">
    <property type="method" value="X-ray"/>
    <property type="resolution" value="2.40 A"/>
    <property type="chains" value="U=2-67"/>
</dbReference>
<dbReference type="PDB" id="1VQK">
    <property type="method" value="X-ray"/>
    <property type="resolution" value="2.30 A"/>
    <property type="chains" value="U=2-67"/>
</dbReference>
<dbReference type="PDB" id="1VQL">
    <property type="method" value="X-ray"/>
    <property type="resolution" value="2.30 A"/>
    <property type="chains" value="U=2-67"/>
</dbReference>
<dbReference type="PDB" id="1VQM">
    <property type="method" value="X-ray"/>
    <property type="resolution" value="2.30 A"/>
    <property type="chains" value="U=2-67"/>
</dbReference>
<dbReference type="PDB" id="1VQN">
    <property type="method" value="X-ray"/>
    <property type="resolution" value="2.40 A"/>
    <property type="chains" value="U=2-67"/>
</dbReference>
<dbReference type="PDB" id="1VQO">
    <property type="method" value="X-ray"/>
    <property type="resolution" value="2.20 A"/>
    <property type="chains" value="U=2-67"/>
</dbReference>
<dbReference type="PDB" id="1VQP">
    <property type="method" value="X-ray"/>
    <property type="resolution" value="2.25 A"/>
    <property type="chains" value="U=2-67"/>
</dbReference>
<dbReference type="PDB" id="1W2B">
    <property type="method" value="X-ray"/>
    <property type="resolution" value="3.50 A"/>
    <property type="chains" value="T=2-67"/>
</dbReference>
<dbReference type="PDB" id="1YHQ">
    <property type="method" value="X-ray"/>
    <property type="resolution" value="2.40 A"/>
    <property type="chains" value="U=2-67"/>
</dbReference>
<dbReference type="PDB" id="1YI2">
    <property type="method" value="X-ray"/>
    <property type="resolution" value="2.65 A"/>
    <property type="chains" value="U=2-67"/>
</dbReference>
<dbReference type="PDB" id="1YIJ">
    <property type="method" value="X-ray"/>
    <property type="resolution" value="2.60 A"/>
    <property type="chains" value="U=2-67"/>
</dbReference>
<dbReference type="PDB" id="1YIT">
    <property type="method" value="X-ray"/>
    <property type="resolution" value="2.80 A"/>
    <property type="chains" value="U=2-67"/>
</dbReference>
<dbReference type="PDB" id="1YJ9">
    <property type="method" value="X-ray"/>
    <property type="resolution" value="2.80 A"/>
    <property type="chains" value="U=2-67"/>
</dbReference>
<dbReference type="PDB" id="1YJN">
    <property type="method" value="X-ray"/>
    <property type="resolution" value="3.00 A"/>
    <property type="chains" value="U=2-67"/>
</dbReference>
<dbReference type="PDB" id="1YJW">
    <property type="method" value="X-ray"/>
    <property type="resolution" value="2.90 A"/>
    <property type="chains" value="U=2-67"/>
</dbReference>
<dbReference type="PDB" id="2OTJ">
    <property type="method" value="X-ray"/>
    <property type="resolution" value="2.90 A"/>
    <property type="chains" value="U=2-67"/>
</dbReference>
<dbReference type="PDB" id="2OTL">
    <property type="method" value="X-ray"/>
    <property type="resolution" value="2.70 A"/>
    <property type="chains" value="U=2-67"/>
</dbReference>
<dbReference type="PDB" id="2QA4">
    <property type="method" value="X-ray"/>
    <property type="resolution" value="3.00 A"/>
    <property type="chains" value="U=1-67"/>
</dbReference>
<dbReference type="PDB" id="2QEX">
    <property type="method" value="X-ray"/>
    <property type="resolution" value="2.90 A"/>
    <property type="chains" value="U=1-67"/>
</dbReference>
<dbReference type="PDB" id="3CC2">
    <property type="method" value="X-ray"/>
    <property type="resolution" value="2.40 A"/>
    <property type="chains" value="U=1-67"/>
</dbReference>
<dbReference type="PDB" id="3CC4">
    <property type="method" value="X-ray"/>
    <property type="resolution" value="2.70 A"/>
    <property type="chains" value="U=1-67"/>
</dbReference>
<dbReference type="PDB" id="3CC7">
    <property type="method" value="X-ray"/>
    <property type="resolution" value="2.70 A"/>
    <property type="chains" value="U=1-67"/>
</dbReference>
<dbReference type="PDB" id="3CCE">
    <property type="method" value="X-ray"/>
    <property type="resolution" value="2.75 A"/>
    <property type="chains" value="U=1-67"/>
</dbReference>
<dbReference type="PDB" id="3CCJ">
    <property type="method" value="X-ray"/>
    <property type="resolution" value="2.70 A"/>
    <property type="chains" value="U=1-67"/>
</dbReference>
<dbReference type="PDB" id="3CCL">
    <property type="method" value="X-ray"/>
    <property type="resolution" value="2.90 A"/>
    <property type="chains" value="U=1-67"/>
</dbReference>
<dbReference type="PDB" id="3CCM">
    <property type="method" value="X-ray"/>
    <property type="resolution" value="2.55 A"/>
    <property type="chains" value="U=1-67"/>
</dbReference>
<dbReference type="PDB" id="3CCQ">
    <property type="method" value="X-ray"/>
    <property type="resolution" value="2.90 A"/>
    <property type="chains" value="U=1-67"/>
</dbReference>
<dbReference type="PDB" id="3CCR">
    <property type="method" value="X-ray"/>
    <property type="resolution" value="3.00 A"/>
    <property type="chains" value="U=1-67"/>
</dbReference>
<dbReference type="PDB" id="3CCS">
    <property type="method" value="X-ray"/>
    <property type="resolution" value="2.95 A"/>
    <property type="chains" value="U=1-67"/>
</dbReference>
<dbReference type="PDB" id="3CCU">
    <property type="method" value="X-ray"/>
    <property type="resolution" value="2.80 A"/>
    <property type="chains" value="U=1-67"/>
</dbReference>
<dbReference type="PDB" id="3CCV">
    <property type="method" value="X-ray"/>
    <property type="resolution" value="2.90 A"/>
    <property type="chains" value="U=1-67"/>
</dbReference>
<dbReference type="PDB" id="3CD6">
    <property type="method" value="X-ray"/>
    <property type="resolution" value="2.75 A"/>
    <property type="chains" value="U=1-67"/>
</dbReference>
<dbReference type="PDB" id="3CMA">
    <property type="method" value="X-ray"/>
    <property type="resolution" value="2.80 A"/>
    <property type="chains" value="U=1-67"/>
</dbReference>
<dbReference type="PDB" id="3CME">
    <property type="method" value="X-ray"/>
    <property type="resolution" value="2.95 A"/>
    <property type="chains" value="U=1-67"/>
</dbReference>
<dbReference type="PDB" id="3CPW">
    <property type="method" value="X-ray"/>
    <property type="resolution" value="2.70 A"/>
    <property type="chains" value="T=1-67"/>
</dbReference>
<dbReference type="PDB" id="3CXC">
    <property type="method" value="X-ray"/>
    <property type="resolution" value="3.00 A"/>
    <property type="chains" value="T=2-67"/>
</dbReference>
<dbReference type="PDB" id="3G4S">
    <property type="method" value="X-ray"/>
    <property type="resolution" value="3.20 A"/>
    <property type="chains" value="U=5-57"/>
</dbReference>
<dbReference type="PDB" id="3G6E">
    <property type="method" value="X-ray"/>
    <property type="resolution" value="2.70 A"/>
    <property type="chains" value="U=5-57"/>
</dbReference>
<dbReference type="PDB" id="3G71">
    <property type="method" value="X-ray"/>
    <property type="resolution" value="2.85 A"/>
    <property type="chains" value="U=5-57"/>
</dbReference>
<dbReference type="PDB" id="3I55">
    <property type="method" value="X-ray"/>
    <property type="resolution" value="3.11 A"/>
    <property type="chains" value="U=2-67"/>
</dbReference>
<dbReference type="PDB" id="3I56">
    <property type="method" value="X-ray"/>
    <property type="resolution" value="2.90 A"/>
    <property type="chains" value="U=2-67"/>
</dbReference>
<dbReference type="PDB" id="3OW2">
    <property type="method" value="X-ray"/>
    <property type="resolution" value="2.70 A"/>
    <property type="chains" value="T=5-57"/>
</dbReference>
<dbReference type="PDB" id="4ADX">
    <property type="method" value="EM"/>
    <property type="resolution" value="6.60 A"/>
    <property type="chains" value="U=1-67"/>
</dbReference>
<dbReference type="PDB" id="4V42">
    <property type="method" value="X-ray"/>
    <property type="resolution" value="5.50 A"/>
    <property type="chains" value="BR=2-67"/>
</dbReference>
<dbReference type="PDB" id="4V4R">
    <property type="method" value="X-ray"/>
    <property type="resolution" value="5.90 A"/>
    <property type="chains" value="T=2-67"/>
</dbReference>
<dbReference type="PDB" id="4V4S">
    <property type="method" value="X-ray"/>
    <property type="resolution" value="6.76 A"/>
    <property type="chains" value="T=2-67"/>
</dbReference>
<dbReference type="PDB" id="4V4T">
    <property type="method" value="X-ray"/>
    <property type="resolution" value="6.46 A"/>
    <property type="chains" value="T=2-67"/>
</dbReference>
<dbReference type="PDB" id="4V9F">
    <property type="method" value="X-ray"/>
    <property type="resolution" value="2.40 A"/>
    <property type="chains" value="U=1-67"/>
</dbReference>
<dbReference type="PDBsum" id="1FFK"/>
<dbReference type="PDBsum" id="1JJ2"/>
<dbReference type="PDBsum" id="1K73"/>
<dbReference type="PDBsum" id="1K8A"/>
<dbReference type="PDBsum" id="1K9M"/>
<dbReference type="PDBsum" id="1KC8"/>
<dbReference type="PDBsum" id="1KD1"/>
<dbReference type="PDBsum" id="1KQS"/>
<dbReference type="PDBsum" id="1M1K"/>
<dbReference type="PDBsum" id="1M90"/>
<dbReference type="PDBsum" id="1ML5"/>
<dbReference type="PDBsum" id="1N8R"/>
<dbReference type="PDBsum" id="1NJI"/>
<dbReference type="PDBsum" id="1Q7Y"/>
<dbReference type="PDBsum" id="1Q81"/>
<dbReference type="PDBsum" id="1Q82"/>
<dbReference type="PDBsum" id="1Q86"/>
<dbReference type="PDBsum" id="1QVF"/>
<dbReference type="PDBsum" id="1QVG"/>
<dbReference type="PDBsum" id="1S72"/>
<dbReference type="PDBsum" id="1VQ4"/>
<dbReference type="PDBsum" id="1VQ5"/>
<dbReference type="PDBsum" id="1VQ6"/>
<dbReference type="PDBsum" id="1VQ7"/>
<dbReference type="PDBsum" id="1VQ8"/>
<dbReference type="PDBsum" id="1VQ9"/>
<dbReference type="PDBsum" id="1VQK"/>
<dbReference type="PDBsum" id="1VQL"/>
<dbReference type="PDBsum" id="1VQM"/>
<dbReference type="PDBsum" id="1VQN"/>
<dbReference type="PDBsum" id="1VQO"/>
<dbReference type="PDBsum" id="1VQP"/>
<dbReference type="PDBsum" id="1W2B"/>
<dbReference type="PDBsum" id="1YHQ"/>
<dbReference type="PDBsum" id="1YI2"/>
<dbReference type="PDBsum" id="1YIJ"/>
<dbReference type="PDBsum" id="1YIT"/>
<dbReference type="PDBsum" id="1YJ9"/>
<dbReference type="PDBsum" id="1YJN"/>
<dbReference type="PDBsum" id="1YJW"/>
<dbReference type="PDBsum" id="2OTJ"/>
<dbReference type="PDBsum" id="2OTL"/>
<dbReference type="PDBsum" id="2QA4"/>
<dbReference type="PDBsum" id="2QEX"/>
<dbReference type="PDBsum" id="3CC2"/>
<dbReference type="PDBsum" id="3CC4"/>
<dbReference type="PDBsum" id="3CC7"/>
<dbReference type="PDBsum" id="3CCE"/>
<dbReference type="PDBsum" id="3CCJ"/>
<dbReference type="PDBsum" id="3CCL"/>
<dbReference type="PDBsum" id="3CCM"/>
<dbReference type="PDBsum" id="3CCQ"/>
<dbReference type="PDBsum" id="3CCR"/>
<dbReference type="PDBsum" id="3CCS"/>
<dbReference type="PDBsum" id="3CCU"/>
<dbReference type="PDBsum" id="3CCV"/>
<dbReference type="PDBsum" id="3CD6"/>
<dbReference type="PDBsum" id="3CMA"/>
<dbReference type="PDBsum" id="3CME"/>
<dbReference type="PDBsum" id="3CPW"/>
<dbReference type="PDBsum" id="3CXC"/>
<dbReference type="PDBsum" id="3G4S"/>
<dbReference type="PDBsum" id="3G6E"/>
<dbReference type="PDBsum" id="3G71"/>
<dbReference type="PDBsum" id="3I55"/>
<dbReference type="PDBsum" id="3I56"/>
<dbReference type="PDBsum" id="3OW2"/>
<dbReference type="PDBsum" id="4ADX"/>
<dbReference type="PDBsum" id="4V42"/>
<dbReference type="PDBsum" id="4V4R"/>
<dbReference type="PDBsum" id="4V4S"/>
<dbReference type="PDBsum" id="4V4T"/>
<dbReference type="PDBsum" id="4V9F"/>
<dbReference type="SMR" id="P14116"/>
<dbReference type="IntAct" id="P14116">
    <property type="interactions" value="3"/>
</dbReference>
<dbReference type="STRING" id="272569.rrnAC0104"/>
<dbReference type="PaxDb" id="272569-rrnAC0104"/>
<dbReference type="EnsemblBacteria" id="AAV45180">
    <property type="protein sequence ID" value="AAV45180"/>
    <property type="gene ID" value="rrnAC0104"/>
</dbReference>
<dbReference type="KEGG" id="hma:rrnAC0104"/>
<dbReference type="PATRIC" id="fig|272569.17.peg.909"/>
<dbReference type="eggNOG" id="arCOG01950">
    <property type="taxonomic scope" value="Archaea"/>
</dbReference>
<dbReference type="HOGENOM" id="CLU_152994_0_0_2"/>
<dbReference type="EvolutionaryTrace" id="P14116"/>
<dbReference type="Proteomes" id="UP000001169">
    <property type="component" value="Chromosome I"/>
</dbReference>
<dbReference type="GO" id="GO:1990904">
    <property type="term" value="C:ribonucleoprotein complex"/>
    <property type="evidence" value="ECO:0007669"/>
    <property type="project" value="UniProtKB-KW"/>
</dbReference>
<dbReference type="GO" id="GO:0005840">
    <property type="term" value="C:ribosome"/>
    <property type="evidence" value="ECO:0007669"/>
    <property type="project" value="UniProtKB-KW"/>
</dbReference>
<dbReference type="GO" id="GO:0019843">
    <property type="term" value="F:rRNA binding"/>
    <property type="evidence" value="ECO:0007669"/>
    <property type="project" value="UniProtKB-UniRule"/>
</dbReference>
<dbReference type="GO" id="GO:0003735">
    <property type="term" value="F:structural constituent of ribosome"/>
    <property type="evidence" value="ECO:0007669"/>
    <property type="project" value="InterPro"/>
</dbReference>
<dbReference type="GO" id="GO:0008270">
    <property type="term" value="F:zinc ion binding"/>
    <property type="evidence" value="ECO:0007669"/>
    <property type="project" value="UniProtKB-UniRule"/>
</dbReference>
<dbReference type="GO" id="GO:0006412">
    <property type="term" value="P:translation"/>
    <property type="evidence" value="ECO:0007669"/>
    <property type="project" value="UniProtKB-UniRule"/>
</dbReference>
<dbReference type="CDD" id="cd00472">
    <property type="entry name" value="Ribosomal_L24e_L24"/>
    <property type="match status" value="1"/>
</dbReference>
<dbReference type="Gene3D" id="2.30.170.20">
    <property type="entry name" value="Ribosomal protein L24e"/>
    <property type="match status" value="1"/>
</dbReference>
<dbReference type="HAMAP" id="MF_00773">
    <property type="entry name" value="Ribosomal_eL24"/>
    <property type="match status" value="1"/>
</dbReference>
<dbReference type="InterPro" id="IPR038630">
    <property type="entry name" value="L24e/L24_sf"/>
</dbReference>
<dbReference type="InterPro" id="IPR055345">
    <property type="entry name" value="Ribosomal_eL24-rel_arc"/>
</dbReference>
<dbReference type="InterPro" id="IPR000988">
    <property type="entry name" value="Ribosomal_eL24-rel_N"/>
</dbReference>
<dbReference type="InterPro" id="IPR023442">
    <property type="entry name" value="Ribosomal_eL24_CS"/>
</dbReference>
<dbReference type="InterPro" id="IPR011017">
    <property type="entry name" value="TRASH_dom"/>
</dbReference>
<dbReference type="NCBIfam" id="NF034186">
    <property type="entry name" value="PRK14891.1-1"/>
    <property type="match status" value="1"/>
</dbReference>
<dbReference type="Pfam" id="PF01246">
    <property type="entry name" value="Ribosomal_L24e"/>
    <property type="match status" value="1"/>
</dbReference>
<dbReference type="SMART" id="SM00746">
    <property type="entry name" value="TRASH"/>
    <property type="match status" value="1"/>
</dbReference>
<dbReference type="SUPFAM" id="SSF57716">
    <property type="entry name" value="Glucocorticoid receptor-like (DNA-binding domain)"/>
    <property type="match status" value="1"/>
</dbReference>
<dbReference type="PROSITE" id="PS01073">
    <property type="entry name" value="RIBOSOMAL_L24E"/>
    <property type="match status" value="1"/>
</dbReference>
<evidence type="ECO:0000256" key="1">
    <source>
        <dbReference type="SAM" id="MobiDB-lite"/>
    </source>
</evidence>
<evidence type="ECO:0000269" key="2">
    <source>
    </source>
</evidence>
<evidence type="ECO:0000269" key="3">
    <source>
    </source>
</evidence>
<evidence type="ECO:0000269" key="4">
    <source>
    </source>
</evidence>
<evidence type="ECO:0000305" key="5"/>
<evidence type="ECO:0007829" key="6">
    <source>
        <dbReference type="PDB" id="1VQ7"/>
    </source>
</evidence>
<evidence type="ECO:0007829" key="7">
    <source>
        <dbReference type="PDB" id="1VQ8"/>
    </source>
</evidence>
<evidence type="ECO:0007829" key="8">
    <source>
        <dbReference type="PDB" id="3CCS"/>
    </source>
</evidence>
<name>RL24E_HALMA</name>
<organism>
    <name type="scientific">Haloarcula marismortui (strain ATCC 43049 / DSM 3752 / JCM 8966 / VKM B-1809)</name>
    <name type="common">Halobacterium marismortui</name>
    <dbReference type="NCBI Taxonomy" id="272569"/>
    <lineage>
        <taxon>Archaea</taxon>
        <taxon>Methanobacteriati</taxon>
        <taxon>Methanobacteriota</taxon>
        <taxon>Stenosarchaea group</taxon>
        <taxon>Halobacteria</taxon>
        <taxon>Halobacteriales</taxon>
        <taxon>Haloarculaceae</taxon>
        <taxon>Haloarcula</taxon>
    </lineage>
</organism>
<reference key="1">
    <citation type="journal article" date="2004" name="Genome Res.">
        <title>Genome sequence of Haloarcula marismortui: a halophilic archaeon from the Dead Sea.</title>
        <authorList>
            <person name="Baliga N.S."/>
            <person name="Bonneau R."/>
            <person name="Facciotti M.T."/>
            <person name="Pan M."/>
            <person name="Glusman G."/>
            <person name="Deutsch E.W."/>
            <person name="Shannon P."/>
            <person name="Chiu Y."/>
            <person name="Weng R.S."/>
            <person name="Gan R.R."/>
            <person name="Hung P."/>
            <person name="Date S.V."/>
            <person name="Marcotte E."/>
            <person name="Hood L."/>
            <person name="Ng W.V."/>
        </authorList>
    </citation>
    <scope>NUCLEOTIDE SEQUENCE [LARGE SCALE GENOMIC DNA]</scope>
    <source>
        <strain>ATCC 43049 / DSM 3752 / JCM 8966 / VKM B-1809</strain>
    </source>
</reference>
<reference key="2">
    <citation type="journal article" date="1989" name="Eur. J. Biochem.">
        <title>Primary structures of five ribosomal proteins from the archaebacterium Halobacterium marismortui and their structural relationships to eubacterial and eukaryotic ribosomal proteins.</title>
        <authorList>
            <person name="Hatakeyama T."/>
            <person name="Kaufmann F."/>
            <person name="Schroeter B."/>
            <person name="Hatakeyama T."/>
        </authorList>
    </citation>
    <scope>PROTEIN SEQUENCE OF 2-67</scope>
</reference>
<reference key="3">
    <citation type="journal article" date="2000" name="Science">
        <title>The complete atomic structure of the large ribosomal subunit at 2.4 A resolution.</title>
        <authorList>
            <person name="Ban N."/>
            <person name="Nissen P."/>
            <person name="Hansen J."/>
            <person name="Moore P.B."/>
            <person name="Steitz T.A."/>
        </authorList>
    </citation>
    <scope>X-RAY CRYSTALLOGRAPHY (2.4 ANGSTROMS) OF THE 50S SUBUNIT</scope>
    <source>
        <strain>ATCC 43049 / DSM 3752 / JCM 8966 / VKM B-1809</strain>
    </source>
</reference>
<reference key="4">
    <citation type="journal article" date="2000" name="Science">
        <title>The structural basis of ribosome activity in peptide bond synthesis.</title>
        <authorList>
            <person name="Nissen P."/>
            <person name="Hansen J."/>
            <person name="Ban N."/>
            <person name="Moore P.B."/>
            <person name="Steitz T.A."/>
        </authorList>
    </citation>
    <scope>X-RAY CRYSTALLOGRAPHY (3.0 ANGSTROMS) OF THE 50S SUBUNIT</scope>
    <source>
        <strain>ATCC 43049 / DSM 3752 / JCM 8966 / VKM B-1809</strain>
    </source>
</reference>
<reference key="5">
    <citation type="journal article" date="2002" name="Nat. Struct. Biol.">
        <title>A pre-translocational intermediate in protein synthesis observed in crystals of enzymatically active 50S subunits.</title>
        <authorList>
            <person name="Schmeing T.M."/>
            <person name="Seila A.C."/>
            <person name="Hansen J.L."/>
            <person name="Freeborn B."/>
            <person name="Soukup J.K."/>
            <person name="Scaringe S.A."/>
            <person name="Strobel S.A."/>
            <person name="Moore P.B."/>
            <person name="Steitz T.A."/>
        </authorList>
    </citation>
    <scope>X-RAY CRYSTALLOGRAPHY (3.1 ANGSTROMS) OF THE 50S SUBUNIT</scope>
    <source>
        <strain>ATCC 43049 / DSM 3752 / JCM 8966 / VKM B-1809</strain>
    </source>
</reference>
<reference key="6">
    <citation type="journal article" date="2001" name="EMBO J.">
        <title>The kink-turn: a new RNA secondary structure motif.</title>
        <authorList>
            <person name="Klein D.J."/>
            <person name="Schmeing T.M."/>
            <person name="Moore P.B."/>
            <person name="Steitz T.A."/>
        </authorList>
    </citation>
    <scope>X-RAY CRYSTALLOGRAPHY (2.4 ANGSTROMS) OF THE 50S SUBUNIT</scope>
    <source>
        <strain>ATCC 43049 / DSM 3752 / JCM 8966 / VKM B-1809</strain>
    </source>
</reference>
<reference key="7">
    <citation type="journal article" date="2002" name="Mol. Cell">
        <title>The structures of four macrolide antibiotics bound to the large ribosomal subunit.</title>
        <authorList>
            <person name="Hansen J.L."/>
            <person name="Ippolito J.A."/>
            <person name="Ban N."/>
            <person name="Nissen P."/>
            <person name="Moore P.B."/>
            <person name="Steitz T.A."/>
        </authorList>
    </citation>
    <scope>X-RAY CRYSTALLOGRAPHY (3.0 ANGSTROMS) OF THE 50S SUBUNIT IN COMPLEX WITH FOUR MACROLIDE ANTIBIOTICS</scope>
    <source>
        <strain>ATCC 43049 / DSM 3752 / JCM 8966 / VKM B-1809</strain>
    </source>
</reference>
<reference key="8">
    <citation type="journal article" date="2002" name="Proc. Natl. Acad. Sci. U.S.A.">
        <title>Structural insights into peptide bond formation.</title>
        <authorList>
            <person name="Hansen J.L."/>
            <person name="Schmeing T.M."/>
            <person name="Moore P.B."/>
            <person name="Steitz T.A."/>
        </authorList>
    </citation>
    <scope>X-RAY CRYSTALLOGRAPHY (2.8 ANGSTROMS) OF THE 50S SUBUNIT</scope>
    <source>
        <strain>ATCC 43049 / DSM 3752 / JCM 8966 / VKM B-1809</strain>
    </source>
</reference>
<reference key="9">
    <citation type="journal article" date="2003" name="J. Mol. Biol.">
        <title>Structures of five antibiotics bound at the peptidyl transferase center of the large ribosomal subunit.</title>
        <authorList>
            <person name="Hansen J.L."/>
            <person name="Moore P.B."/>
            <person name="Steitz T.A."/>
        </authorList>
    </citation>
    <scope>X-RAY CRYSTALLOGRAPHY (3.0 ANGSTROMS) OF THE 50S SUBUNIT IN COMPLEX WITH FIVE ANTIBIOTICS AT THE PEPTIDYL TRANSFERASE CENTER</scope>
    <source>
        <strain>ATCC 43049 / DSM 3752 / JCM 8966 / VKM B-1809</strain>
    </source>
</reference>
<reference key="10">
    <citation type="journal article" date="2003" name="RNA">
        <title>Structures of deacylated tRNA mimics bound to the E site of the large ribosomal subunit.</title>
        <authorList>
            <person name="Schmeing T.M."/>
            <person name="Moore P.B."/>
            <person name="Steitz T.A."/>
        </authorList>
    </citation>
    <scope>X-RAY CRYSTALLOGRAPHY (2.9 ANGSTROMS) OF THE 50S SUBUNIT WITH TWO DIFFERENT E SITE SUBSTRATES</scope>
</reference>
<reference key="11">
    <citation type="journal article" date="2013" name="Acta Crystallogr. D">
        <title>Revisiting the Haloarcula marismortui 50S ribosomal subunit model.</title>
        <authorList>
            <person name="Gabdulkhakov A."/>
            <person name="Nikonov S."/>
            <person name="Garber M."/>
        </authorList>
    </citation>
    <scope>X-RAY CRYSTALLOGRAPHY (2.4 ANGSTROMS) OF THE 50S SUBUNIT</scope>
</reference>
<proteinExistence type="evidence at protein level"/>
<sequence length="67" mass="7356">MPRTRECDYCGTDIEPGTGTMFVHKDGATTHFCSSKCENNADLGREARNLEWTDTARGEAGEAEDEA</sequence>
<feature type="initiator methionine" description="Removed" evidence="4">
    <location>
        <position position="1"/>
    </location>
</feature>
<feature type="chain" id="PRO_0000136913" description="Large ribosomal subunit protein eL24">
    <location>
        <begin position="2"/>
        <end position="67"/>
    </location>
</feature>
<feature type="zinc finger region" description="C4-type" evidence="5">
    <location>
        <begin position="7"/>
        <end position="37"/>
    </location>
</feature>
<feature type="region of interest" description="Disordered" evidence="1">
    <location>
        <begin position="48"/>
        <end position="67"/>
    </location>
</feature>
<feature type="compositionally biased region" description="Basic and acidic residues" evidence="1">
    <location>
        <begin position="48"/>
        <end position="60"/>
    </location>
</feature>
<feature type="binding site" evidence="5">
    <location>
        <position position="7"/>
    </location>
    <ligand>
        <name>Zn(2+)</name>
        <dbReference type="ChEBI" id="CHEBI:29105"/>
    </ligand>
</feature>
<feature type="binding site" evidence="5">
    <location>
        <position position="10"/>
    </location>
    <ligand>
        <name>Zn(2+)</name>
        <dbReference type="ChEBI" id="CHEBI:29105"/>
    </ligand>
</feature>
<feature type="binding site" evidence="5">
    <location>
        <position position="33"/>
    </location>
    <ligand>
        <name>Zn(2+)</name>
        <dbReference type="ChEBI" id="CHEBI:29105"/>
    </ligand>
</feature>
<feature type="binding site" evidence="5">
    <location>
        <position position="37"/>
    </location>
    <ligand>
        <name>Zn(2+)</name>
        <dbReference type="ChEBI" id="CHEBI:29105"/>
    </ligand>
</feature>
<feature type="turn" evidence="7">
    <location>
        <begin position="8"/>
        <end position="10"/>
    </location>
</feature>
<feature type="strand" evidence="7">
    <location>
        <begin position="20"/>
        <end position="23"/>
    </location>
</feature>
<feature type="strand" evidence="6">
    <location>
        <begin position="25"/>
        <end position="27"/>
    </location>
</feature>
<feature type="strand" evidence="7">
    <location>
        <begin position="29"/>
        <end position="33"/>
    </location>
</feature>
<feature type="helix" evidence="7">
    <location>
        <begin position="35"/>
        <end position="42"/>
    </location>
</feature>
<feature type="helix" evidence="7">
    <location>
        <begin position="47"/>
        <end position="49"/>
    </location>
</feature>
<feature type="strand" evidence="8">
    <location>
        <begin position="50"/>
        <end position="53"/>
    </location>
</feature>
<feature type="turn" evidence="7">
    <location>
        <begin position="54"/>
        <end position="56"/>
    </location>
</feature>
<accession>P14116</accession>
<accession>Q5V5M2</accession>
<gene>
    <name type="primary">rpl24e</name>
    <name type="ordered locus">rrnAC0104</name>
</gene>
<keyword id="KW-0002">3D-structure</keyword>
<keyword id="KW-0903">Direct protein sequencing</keyword>
<keyword id="KW-0479">Metal-binding</keyword>
<keyword id="KW-1185">Reference proteome</keyword>
<keyword id="KW-0687">Ribonucleoprotein</keyword>
<keyword id="KW-0689">Ribosomal protein</keyword>
<keyword id="KW-0694">RNA-binding</keyword>
<keyword id="KW-0699">rRNA-binding</keyword>
<keyword id="KW-0862">Zinc</keyword>
<keyword id="KW-0863">Zinc-finger</keyword>
<protein>
    <recommendedName>
        <fullName evidence="5">Large ribosomal subunit protein eL24</fullName>
    </recommendedName>
    <alternativeName>
        <fullName>50S ribosomal protein L24e</fullName>
    </alternativeName>
    <alternativeName>
        <fullName>Hl21/Hl22</fullName>
    </alternativeName>
</protein>